<protein>
    <recommendedName>
        <fullName evidence="1">Formimidoylglutamase</fullName>
        <ecNumber evidence="1">3.5.3.8</ecNumber>
    </recommendedName>
    <alternativeName>
        <fullName evidence="1">Formiminoglutamase</fullName>
    </alternativeName>
    <alternativeName>
        <fullName evidence="1">Formiminoglutamate hydrolase</fullName>
    </alternativeName>
</protein>
<comment type="function">
    <text evidence="1">Catalyzes the conversion of N-formimidoyl-L-glutamate to L-glutamate and formamide.</text>
</comment>
<comment type="catalytic activity">
    <reaction evidence="1">
        <text>N-formimidoyl-L-glutamate + H2O = formamide + L-glutamate</text>
        <dbReference type="Rhea" id="RHEA:22492"/>
        <dbReference type="ChEBI" id="CHEBI:15377"/>
        <dbReference type="ChEBI" id="CHEBI:16397"/>
        <dbReference type="ChEBI" id="CHEBI:29985"/>
        <dbReference type="ChEBI" id="CHEBI:58928"/>
        <dbReference type="EC" id="3.5.3.8"/>
    </reaction>
</comment>
<comment type="cofactor">
    <cofactor evidence="1">
        <name>Mn(2+)</name>
        <dbReference type="ChEBI" id="CHEBI:29035"/>
    </cofactor>
    <text evidence="1">Binds 2 manganese ions per subunit.</text>
</comment>
<comment type="pathway">
    <text evidence="1">Amino-acid degradation; L-histidine degradation into L-glutamate; L-glutamate from N-formimidoyl-L-glutamate (hydrolase route): step 1/1.</text>
</comment>
<comment type="similarity">
    <text evidence="1">Belongs to the arginase family.</text>
</comment>
<gene>
    <name evidence="1" type="primary">hutG</name>
    <name type="ordered locus">GWCH70_1279</name>
</gene>
<keyword id="KW-0369">Histidine metabolism</keyword>
<keyword id="KW-0378">Hydrolase</keyword>
<keyword id="KW-0464">Manganese</keyword>
<keyword id="KW-0479">Metal-binding</keyword>
<evidence type="ECO:0000255" key="1">
    <source>
        <dbReference type="HAMAP-Rule" id="MF_00737"/>
    </source>
</evidence>
<accession>C5DA16</accession>
<name>HUTG_GEOSW</name>
<sequence length="325" mass="36122">MYKQPDKEKWTGRIDSESDEKSFRVHQKIRLLDIGQIQTQAENAFALLGFQCDEGVRRNQGRQGAYHAPVEVKKALANLPWHLPSHTILYDVGEITCEGGELENSQKHLGQAVERLICHNITPVVIGGGHETAYGHYLGVRQAVGSETKLGIINIDAHFDMRPYEQGPSSGTMFRQILDEDGNVGYCCLGIQPLGNTAALFETANRYGCTYVLEEELTLATLERAYEIIDDFIQNYDVLMLTLCMDVLSASAAPGVSAPSPFGLDPKIVRALLRYIISKPQTISFDICEVNPLVDENRKTIALAAAFCMEALVHFHRRQRAATGR</sequence>
<reference key="1">
    <citation type="submission" date="2009-06" db="EMBL/GenBank/DDBJ databases">
        <title>Complete sequence of chromosome of Geopacillus sp. WCH70.</title>
        <authorList>
            <consortium name="US DOE Joint Genome Institute"/>
            <person name="Lucas S."/>
            <person name="Copeland A."/>
            <person name="Lapidus A."/>
            <person name="Glavina del Rio T."/>
            <person name="Dalin E."/>
            <person name="Tice H."/>
            <person name="Bruce D."/>
            <person name="Goodwin L."/>
            <person name="Pitluck S."/>
            <person name="Chertkov O."/>
            <person name="Brettin T."/>
            <person name="Detter J.C."/>
            <person name="Han C."/>
            <person name="Larimer F."/>
            <person name="Land M."/>
            <person name="Hauser L."/>
            <person name="Kyrpides N."/>
            <person name="Mikhailova N."/>
            <person name="Brumm P."/>
            <person name="Mead D.A."/>
            <person name="Richardson P."/>
        </authorList>
    </citation>
    <scope>NUCLEOTIDE SEQUENCE [LARGE SCALE GENOMIC DNA]</scope>
    <source>
        <strain>WCH70</strain>
    </source>
</reference>
<dbReference type="EC" id="3.5.3.8" evidence="1"/>
<dbReference type="EMBL" id="CP001638">
    <property type="protein sequence ID" value="ACS24130.1"/>
    <property type="molecule type" value="Genomic_DNA"/>
</dbReference>
<dbReference type="SMR" id="C5DA16"/>
<dbReference type="STRING" id="471223.GWCH70_1279"/>
<dbReference type="KEGG" id="gwc:GWCH70_1279"/>
<dbReference type="eggNOG" id="COG0010">
    <property type="taxonomic scope" value="Bacteria"/>
</dbReference>
<dbReference type="HOGENOM" id="CLU_039478_2_0_9"/>
<dbReference type="OrthoDB" id="9788689at2"/>
<dbReference type="UniPathway" id="UPA00379">
    <property type="reaction ID" value="UER00552"/>
</dbReference>
<dbReference type="GO" id="GO:0008783">
    <property type="term" value="F:agmatinase activity"/>
    <property type="evidence" value="ECO:0007669"/>
    <property type="project" value="TreeGrafter"/>
</dbReference>
<dbReference type="GO" id="GO:0050415">
    <property type="term" value="F:formimidoylglutamase activity"/>
    <property type="evidence" value="ECO:0007669"/>
    <property type="project" value="UniProtKB-UniRule"/>
</dbReference>
<dbReference type="GO" id="GO:0030145">
    <property type="term" value="F:manganese ion binding"/>
    <property type="evidence" value="ECO:0007669"/>
    <property type="project" value="UniProtKB-UniRule"/>
</dbReference>
<dbReference type="GO" id="GO:0019556">
    <property type="term" value="P:L-histidine catabolic process to glutamate and formamide"/>
    <property type="evidence" value="ECO:0007669"/>
    <property type="project" value="UniProtKB-UniPathway"/>
</dbReference>
<dbReference type="GO" id="GO:0019557">
    <property type="term" value="P:L-histidine catabolic process to glutamate and formate"/>
    <property type="evidence" value="ECO:0007669"/>
    <property type="project" value="UniProtKB-UniPathway"/>
</dbReference>
<dbReference type="GO" id="GO:0033389">
    <property type="term" value="P:putrescine biosynthetic process from arginine, via agmatine"/>
    <property type="evidence" value="ECO:0007669"/>
    <property type="project" value="TreeGrafter"/>
</dbReference>
<dbReference type="CDD" id="cd09988">
    <property type="entry name" value="Formimidoylglutamase"/>
    <property type="match status" value="1"/>
</dbReference>
<dbReference type="Gene3D" id="3.40.800.10">
    <property type="entry name" value="Ureohydrolase domain"/>
    <property type="match status" value="1"/>
</dbReference>
<dbReference type="HAMAP" id="MF_00737">
    <property type="entry name" value="Formimidoylglutam"/>
    <property type="match status" value="1"/>
</dbReference>
<dbReference type="InterPro" id="IPR005923">
    <property type="entry name" value="HutG"/>
</dbReference>
<dbReference type="InterPro" id="IPR006035">
    <property type="entry name" value="Ureohydrolase"/>
</dbReference>
<dbReference type="InterPro" id="IPR023696">
    <property type="entry name" value="Ureohydrolase_dom_sf"/>
</dbReference>
<dbReference type="NCBIfam" id="TIGR01227">
    <property type="entry name" value="hutG"/>
    <property type="match status" value="1"/>
</dbReference>
<dbReference type="PANTHER" id="PTHR11358">
    <property type="entry name" value="ARGINASE/AGMATINASE"/>
    <property type="match status" value="1"/>
</dbReference>
<dbReference type="PANTHER" id="PTHR11358:SF35">
    <property type="entry name" value="FORMIMIDOYLGLUTAMASE"/>
    <property type="match status" value="1"/>
</dbReference>
<dbReference type="Pfam" id="PF00491">
    <property type="entry name" value="Arginase"/>
    <property type="match status" value="1"/>
</dbReference>
<dbReference type="PIRSF" id="PIRSF036979">
    <property type="entry name" value="Arginase"/>
    <property type="match status" value="1"/>
</dbReference>
<dbReference type="SUPFAM" id="SSF52768">
    <property type="entry name" value="Arginase/deacetylase"/>
    <property type="match status" value="1"/>
</dbReference>
<dbReference type="PROSITE" id="PS51409">
    <property type="entry name" value="ARGINASE_2"/>
    <property type="match status" value="1"/>
</dbReference>
<feature type="chain" id="PRO_1000212798" description="Formimidoylglutamase">
    <location>
        <begin position="1"/>
        <end position="325"/>
    </location>
</feature>
<feature type="binding site" evidence="1">
    <location>
        <position position="130"/>
    </location>
    <ligand>
        <name>Mn(2+)</name>
        <dbReference type="ChEBI" id="CHEBI:29035"/>
        <label>1</label>
    </ligand>
</feature>
<feature type="binding site" evidence="1">
    <location>
        <position position="156"/>
    </location>
    <ligand>
        <name>Mn(2+)</name>
        <dbReference type="ChEBI" id="CHEBI:29035"/>
        <label>1</label>
    </ligand>
</feature>
<feature type="binding site" evidence="1">
    <location>
        <position position="156"/>
    </location>
    <ligand>
        <name>Mn(2+)</name>
        <dbReference type="ChEBI" id="CHEBI:29035"/>
        <label>2</label>
    </ligand>
</feature>
<feature type="binding site" evidence="1">
    <location>
        <position position="158"/>
    </location>
    <ligand>
        <name>Mn(2+)</name>
        <dbReference type="ChEBI" id="CHEBI:29035"/>
        <label>2</label>
    </ligand>
</feature>
<feature type="binding site" evidence="1">
    <location>
        <position position="160"/>
    </location>
    <ligand>
        <name>Mn(2+)</name>
        <dbReference type="ChEBI" id="CHEBI:29035"/>
        <label>1</label>
    </ligand>
</feature>
<feature type="binding site" evidence="1">
    <location>
        <position position="244"/>
    </location>
    <ligand>
        <name>Mn(2+)</name>
        <dbReference type="ChEBI" id="CHEBI:29035"/>
        <label>1</label>
    </ligand>
</feature>
<feature type="binding site" evidence="1">
    <location>
        <position position="244"/>
    </location>
    <ligand>
        <name>Mn(2+)</name>
        <dbReference type="ChEBI" id="CHEBI:29035"/>
        <label>2</label>
    </ligand>
</feature>
<feature type="binding site" evidence="1">
    <location>
        <position position="246"/>
    </location>
    <ligand>
        <name>Mn(2+)</name>
        <dbReference type="ChEBI" id="CHEBI:29035"/>
        <label>2</label>
    </ligand>
</feature>
<organism>
    <name type="scientific">Geobacillus sp. (strain WCH70)</name>
    <dbReference type="NCBI Taxonomy" id="471223"/>
    <lineage>
        <taxon>Bacteria</taxon>
        <taxon>Bacillati</taxon>
        <taxon>Bacillota</taxon>
        <taxon>Bacilli</taxon>
        <taxon>Bacillales</taxon>
        <taxon>Anoxybacillaceae</taxon>
        <taxon>Geobacillus</taxon>
    </lineage>
</organism>
<proteinExistence type="inferred from homology"/>